<organism>
    <name type="scientific">Polaromonas sp. (strain JS666 / ATCC BAA-500)</name>
    <dbReference type="NCBI Taxonomy" id="296591"/>
    <lineage>
        <taxon>Bacteria</taxon>
        <taxon>Pseudomonadati</taxon>
        <taxon>Pseudomonadota</taxon>
        <taxon>Betaproteobacteria</taxon>
        <taxon>Burkholderiales</taxon>
        <taxon>Comamonadaceae</taxon>
        <taxon>Polaromonas</taxon>
    </lineage>
</organism>
<evidence type="ECO:0000255" key="1">
    <source>
        <dbReference type="HAMAP-Rule" id="MF_00528"/>
    </source>
</evidence>
<feature type="chain" id="PRO_0000267369" description="7-methyl-GTP pyrophosphatase">
    <location>
        <begin position="1"/>
        <end position="219"/>
    </location>
</feature>
<feature type="active site" description="Proton acceptor" evidence="1">
    <location>
        <position position="89"/>
    </location>
</feature>
<feature type="site" description="Important for substrate specificity" evidence="1">
    <location>
        <position position="32"/>
    </location>
</feature>
<feature type="site" description="Important for substrate specificity" evidence="1">
    <location>
        <position position="90"/>
    </location>
</feature>
<feature type="site" description="Important for substrate specificity" evidence="1">
    <location>
        <position position="174"/>
    </location>
</feature>
<proteinExistence type="inferred from homology"/>
<name>NTPPB_POLSJ</name>
<protein>
    <recommendedName>
        <fullName evidence="1">7-methyl-GTP pyrophosphatase</fullName>
        <shortName evidence="1">m(7)GTP pyrophosphatase</shortName>
        <ecNumber evidence="1">3.6.1.-</ecNumber>
    </recommendedName>
</protein>
<comment type="function">
    <text evidence="1">Nucleoside triphosphate pyrophosphatase that hydrolyzes 7-methyl-GTP (m(7)GTP). May have a dual role in cell division arrest and in preventing the incorporation of modified nucleotides into cellular nucleic acids.</text>
</comment>
<comment type="catalytic activity">
    <reaction evidence="1">
        <text>N(7)-methyl-GTP + H2O = N(7)-methyl-GMP + diphosphate + H(+)</text>
        <dbReference type="Rhea" id="RHEA:58744"/>
        <dbReference type="ChEBI" id="CHEBI:15377"/>
        <dbReference type="ChEBI" id="CHEBI:15378"/>
        <dbReference type="ChEBI" id="CHEBI:33019"/>
        <dbReference type="ChEBI" id="CHEBI:58285"/>
        <dbReference type="ChEBI" id="CHEBI:87133"/>
    </reaction>
</comment>
<comment type="cofactor">
    <cofactor evidence="1">
        <name>a divalent metal cation</name>
        <dbReference type="ChEBI" id="CHEBI:60240"/>
    </cofactor>
</comment>
<comment type="subcellular location">
    <subcellularLocation>
        <location evidence="1">Cytoplasm</location>
    </subcellularLocation>
</comment>
<comment type="similarity">
    <text evidence="1">Belongs to the Maf family. YceF subfamily.</text>
</comment>
<sequence length="219" mass="23286">MNSALNPVAASTAATALTPTSRPLVLGSTSPYRRELLQRLHLPFEVATPDVDETPLPGETPRLLAERLALAKARAVARNFPHAVVIGSDQVADLNGLPLGKPGTHERAVAQLRQMRGQTVVFQTAVAVVCLDSGFEQSSLAAVRVTFRNLTDGEIENYLRAEQPYDCAGSAKSEGLGIALLESIDNDDPTALVGLPLIRTCKMIQAAGVALFADRGEHP</sequence>
<accession>Q126I4</accession>
<gene>
    <name type="ordered locus">Bpro_3654</name>
</gene>
<dbReference type="EC" id="3.6.1.-" evidence="1"/>
<dbReference type="EMBL" id="CP000316">
    <property type="protein sequence ID" value="ABE45558.1"/>
    <property type="molecule type" value="Genomic_DNA"/>
</dbReference>
<dbReference type="RefSeq" id="WP_011484549.1">
    <property type="nucleotide sequence ID" value="NC_007948.1"/>
</dbReference>
<dbReference type="SMR" id="Q126I4"/>
<dbReference type="STRING" id="296591.Bpro_3654"/>
<dbReference type="KEGG" id="pol:Bpro_3654"/>
<dbReference type="eggNOG" id="COG0424">
    <property type="taxonomic scope" value="Bacteria"/>
</dbReference>
<dbReference type="HOGENOM" id="CLU_040416_1_0_4"/>
<dbReference type="Proteomes" id="UP000001983">
    <property type="component" value="Chromosome"/>
</dbReference>
<dbReference type="GO" id="GO:0005737">
    <property type="term" value="C:cytoplasm"/>
    <property type="evidence" value="ECO:0007669"/>
    <property type="project" value="UniProtKB-SubCell"/>
</dbReference>
<dbReference type="GO" id="GO:0047429">
    <property type="term" value="F:nucleoside triphosphate diphosphatase activity"/>
    <property type="evidence" value="ECO:0007669"/>
    <property type="project" value="InterPro"/>
</dbReference>
<dbReference type="GO" id="GO:0009117">
    <property type="term" value="P:nucleotide metabolic process"/>
    <property type="evidence" value="ECO:0007669"/>
    <property type="project" value="UniProtKB-KW"/>
</dbReference>
<dbReference type="CDD" id="cd00555">
    <property type="entry name" value="Maf"/>
    <property type="match status" value="1"/>
</dbReference>
<dbReference type="FunFam" id="3.90.950.10:FF:000005">
    <property type="entry name" value="7-methyl-GTP pyrophosphatase"/>
    <property type="match status" value="1"/>
</dbReference>
<dbReference type="Gene3D" id="3.90.950.10">
    <property type="match status" value="1"/>
</dbReference>
<dbReference type="HAMAP" id="MF_00528">
    <property type="entry name" value="Maf"/>
    <property type="match status" value="1"/>
</dbReference>
<dbReference type="InterPro" id="IPR029001">
    <property type="entry name" value="ITPase-like_fam"/>
</dbReference>
<dbReference type="InterPro" id="IPR003697">
    <property type="entry name" value="Maf-like"/>
</dbReference>
<dbReference type="NCBIfam" id="TIGR00172">
    <property type="entry name" value="maf"/>
    <property type="match status" value="1"/>
</dbReference>
<dbReference type="PANTHER" id="PTHR43213:SF10">
    <property type="entry name" value="7-METHYL-GTP PYROPHOSPHATASE"/>
    <property type="match status" value="1"/>
</dbReference>
<dbReference type="PANTHER" id="PTHR43213">
    <property type="entry name" value="BIFUNCTIONAL DTTP/UTP PYROPHOSPHATASE/METHYLTRANSFERASE PROTEIN-RELATED"/>
    <property type="match status" value="1"/>
</dbReference>
<dbReference type="Pfam" id="PF02545">
    <property type="entry name" value="Maf"/>
    <property type="match status" value="1"/>
</dbReference>
<dbReference type="PIRSF" id="PIRSF006305">
    <property type="entry name" value="Maf"/>
    <property type="match status" value="1"/>
</dbReference>
<dbReference type="SUPFAM" id="SSF52972">
    <property type="entry name" value="ITPase-like"/>
    <property type="match status" value="1"/>
</dbReference>
<keyword id="KW-0963">Cytoplasm</keyword>
<keyword id="KW-0378">Hydrolase</keyword>
<keyword id="KW-0546">Nucleotide metabolism</keyword>
<keyword id="KW-1185">Reference proteome</keyword>
<reference key="1">
    <citation type="journal article" date="2008" name="Appl. Environ. Microbiol.">
        <title>The genome of Polaromonas sp. strain JS666: insights into the evolution of a hydrocarbon- and xenobiotic-degrading bacterium, and features of relevance to biotechnology.</title>
        <authorList>
            <person name="Mattes T.E."/>
            <person name="Alexander A.K."/>
            <person name="Richardson P.M."/>
            <person name="Munk A.C."/>
            <person name="Han C.S."/>
            <person name="Stothard P."/>
            <person name="Coleman N.V."/>
        </authorList>
    </citation>
    <scope>NUCLEOTIDE SEQUENCE [LARGE SCALE GENOMIC DNA]</scope>
    <source>
        <strain>JS666 / ATCC BAA-500</strain>
    </source>
</reference>